<comment type="function">
    <text evidence="1">Required for formation of the sperm connecting piece during spermiogenesis. Sperm connecting piece is essential for linking the developing flagellum to the head during late spermiogenesis. May be involved in myosin-based microfilament transport through interaction with myosin subunits.</text>
</comment>
<comment type="subunit">
    <text evidence="1">Interacts with MYL6.</text>
</comment>
<comment type="interaction">
    <interactant intactId="EBI-53898779">
        <id>Q9NWH7</id>
    </interactant>
    <interactant intactId="EBI-1176171">
        <id>Q92466</id>
        <label>DDB2</label>
    </interactant>
    <organismsDiffer>false</organismsDiffer>
    <experiments>2</experiments>
</comment>
<comment type="interaction">
    <interactant intactId="EBI-17860101">
        <id>Q9NWH7-2</id>
    </interactant>
    <interactant intactId="EBI-541426">
        <id>Q9BXS5</id>
        <label>AP1M1</label>
    </interactant>
    <organismsDiffer>false</organismsDiffer>
    <experiments>3</experiments>
</comment>
<comment type="interaction">
    <interactant intactId="EBI-17860101">
        <id>Q9NWH7-2</id>
    </interactant>
    <interactant intactId="EBI-11530605">
        <id>Q9H257-2</id>
        <label>CARD9</label>
    </interactant>
    <organismsDiffer>false</organismsDiffer>
    <experiments>3</experiments>
</comment>
<comment type="interaction">
    <interactant intactId="EBI-17860101">
        <id>Q9NWH7-2</id>
    </interactant>
    <interactant intactId="EBI-351257">
        <id>P26196</id>
        <label>DDX6</label>
    </interactant>
    <organismsDiffer>false</organismsDiffer>
    <experiments>3</experiments>
</comment>
<comment type="interaction">
    <interactant intactId="EBI-17860101">
        <id>Q9NWH7-2</id>
    </interactant>
    <interactant intactId="EBI-744104">
        <id>P55040</id>
        <label>GEM</label>
    </interactant>
    <organismsDiffer>false</organismsDiffer>
    <experiments>3</experiments>
</comment>
<comment type="interaction">
    <interactant intactId="EBI-17860101">
        <id>Q9NWH7-2</id>
    </interactant>
    <interactant intactId="EBI-746778">
        <id>Q96A72</id>
        <label>MAGOHB</label>
    </interactant>
    <organismsDiffer>false</organismsDiffer>
    <experiments>3</experiments>
</comment>
<comment type="subcellular location">
    <subcellularLocation>
        <location evidence="1">Secreted</location>
    </subcellularLocation>
    <subcellularLocation>
        <location evidence="1">Cell projection</location>
        <location evidence="1">Cilium</location>
        <location evidence="1">Flagellum</location>
    </subcellularLocation>
    <text evidence="1">Specifically localizes to the segmented columns and the capitulum of the sperm connecting piece.</text>
</comment>
<comment type="alternative products">
    <event type="alternative splicing"/>
    <isoform>
        <id>Q9NWH7-1</id>
        <name>1</name>
        <sequence type="displayed"/>
    </isoform>
    <isoform>
        <id>Q9NWH7-2</id>
        <name>2</name>
        <sequence type="described" ref="VSP_023277"/>
    </isoform>
</comment>
<comment type="similarity">
    <text evidence="6">Belongs to the SPATA6 family.</text>
</comment>
<protein>
    <recommendedName>
        <fullName>Spermatogenesis-associated protein 6</fullName>
    </recommendedName>
</protein>
<keyword id="KW-0025">Alternative splicing</keyword>
<keyword id="KW-0966">Cell projection</keyword>
<keyword id="KW-0969">Cilium</keyword>
<keyword id="KW-0217">Developmental protein</keyword>
<keyword id="KW-0221">Differentiation</keyword>
<keyword id="KW-0282">Flagellum</keyword>
<keyword id="KW-0325">Glycoprotein</keyword>
<keyword id="KW-1017">Isopeptide bond</keyword>
<keyword id="KW-0597">Phosphoprotein</keyword>
<keyword id="KW-1267">Proteomics identification</keyword>
<keyword id="KW-1185">Reference proteome</keyword>
<keyword id="KW-0964">Secreted</keyword>
<keyword id="KW-0732">Signal</keyword>
<keyword id="KW-0744">Spermatogenesis</keyword>
<keyword id="KW-0832">Ubl conjugation</keyword>
<accession>Q9NWH7</accession>
<accession>Q5T3N7</accession>
<accession>Q8WUE6</accession>
<organism>
    <name type="scientific">Homo sapiens</name>
    <name type="common">Human</name>
    <dbReference type="NCBI Taxonomy" id="9606"/>
    <lineage>
        <taxon>Eukaryota</taxon>
        <taxon>Metazoa</taxon>
        <taxon>Chordata</taxon>
        <taxon>Craniata</taxon>
        <taxon>Vertebrata</taxon>
        <taxon>Euteleostomi</taxon>
        <taxon>Mammalia</taxon>
        <taxon>Eutheria</taxon>
        <taxon>Euarchontoglires</taxon>
        <taxon>Primates</taxon>
        <taxon>Haplorrhini</taxon>
        <taxon>Catarrhini</taxon>
        <taxon>Hominidae</taxon>
        <taxon>Homo</taxon>
    </lineage>
</organism>
<gene>
    <name type="primary">SPATA6</name>
</gene>
<reference key="1">
    <citation type="journal article" date="2004" name="Nat. Genet.">
        <title>Complete sequencing and characterization of 21,243 full-length human cDNAs.</title>
        <authorList>
            <person name="Ota T."/>
            <person name="Suzuki Y."/>
            <person name="Nishikawa T."/>
            <person name="Otsuki T."/>
            <person name="Sugiyama T."/>
            <person name="Irie R."/>
            <person name="Wakamatsu A."/>
            <person name="Hayashi K."/>
            <person name="Sato H."/>
            <person name="Nagai K."/>
            <person name="Kimura K."/>
            <person name="Makita H."/>
            <person name="Sekine M."/>
            <person name="Obayashi M."/>
            <person name="Nishi T."/>
            <person name="Shibahara T."/>
            <person name="Tanaka T."/>
            <person name="Ishii S."/>
            <person name="Yamamoto J."/>
            <person name="Saito K."/>
            <person name="Kawai Y."/>
            <person name="Isono Y."/>
            <person name="Nakamura Y."/>
            <person name="Nagahari K."/>
            <person name="Murakami K."/>
            <person name="Yasuda T."/>
            <person name="Iwayanagi T."/>
            <person name="Wagatsuma M."/>
            <person name="Shiratori A."/>
            <person name="Sudo H."/>
            <person name="Hosoiri T."/>
            <person name="Kaku Y."/>
            <person name="Kodaira H."/>
            <person name="Kondo H."/>
            <person name="Sugawara M."/>
            <person name="Takahashi M."/>
            <person name="Kanda K."/>
            <person name="Yokoi T."/>
            <person name="Furuya T."/>
            <person name="Kikkawa E."/>
            <person name="Omura Y."/>
            <person name="Abe K."/>
            <person name="Kamihara K."/>
            <person name="Katsuta N."/>
            <person name="Sato K."/>
            <person name="Tanikawa M."/>
            <person name="Yamazaki M."/>
            <person name="Ninomiya K."/>
            <person name="Ishibashi T."/>
            <person name="Yamashita H."/>
            <person name="Murakawa K."/>
            <person name="Fujimori K."/>
            <person name="Tanai H."/>
            <person name="Kimata M."/>
            <person name="Watanabe M."/>
            <person name="Hiraoka S."/>
            <person name="Chiba Y."/>
            <person name="Ishida S."/>
            <person name="Ono Y."/>
            <person name="Takiguchi S."/>
            <person name="Watanabe S."/>
            <person name="Yosida M."/>
            <person name="Hotuta T."/>
            <person name="Kusano J."/>
            <person name="Kanehori K."/>
            <person name="Takahashi-Fujii A."/>
            <person name="Hara H."/>
            <person name="Tanase T.-O."/>
            <person name="Nomura Y."/>
            <person name="Togiya S."/>
            <person name="Komai F."/>
            <person name="Hara R."/>
            <person name="Takeuchi K."/>
            <person name="Arita M."/>
            <person name="Imose N."/>
            <person name="Musashino K."/>
            <person name="Yuuki H."/>
            <person name="Oshima A."/>
            <person name="Sasaki N."/>
            <person name="Aotsuka S."/>
            <person name="Yoshikawa Y."/>
            <person name="Matsunawa H."/>
            <person name="Ichihara T."/>
            <person name="Shiohata N."/>
            <person name="Sano S."/>
            <person name="Moriya S."/>
            <person name="Momiyama H."/>
            <person name="Satoh N."/>
            <person name="Takami S."/>
            <person name="Terashima Y."/>
            <person name="Suzuki O."/>
            <person name="Nakagawa S."/>
            <person name="Senoh A."/>
            <person name="Mizoguchi H."/>
            <person name="Goto Y."/>
            <person name="Shimizu F."/>
            <person name="Wakebe H."/>
            <person name="Hishigaki H."/>
            <person name="Watanabe T."/>
            <person name="Sugiyama A."/>
            <person name="Takemoto M."/>
            <person name="Kawakami B."/>
            <person name="Yamazaki M."/>
            <person name="Watanabe K."/>
            <person name="Kumagai A."/>
            <person name="Itakura S."/>
            <person name="Fukuzumi Y."/>
            <person name="Fujimori Y."/>
            <person name="Komiyama M."/>
            <person name="Tashiro H."/>
            <person name="Tanigami A."/>
            <person name="Fujiwara T."/>
            <person name="Ono T."/>
            <person name="Yamada K."/>
            <person name="Fujii Y."/>
            <person name="Ozaki K."/>
            <person name="Hirao M."/>
            <person name="Ohmori Y."/>
            <person name="Kawabata A."/>
            <person name="Hikiji T."/>
            <person name="Kobatake N."/>
            <person name="Inagaki H."/>
            <person name="Ikema Y."/>
            <person name="Okamoto S."/>
            <person name="Okitani R."/>
            <person name="Kawakami T."/>
            <person name="Noguchi S."/>
            <person name="Itoh T."/>
            <person name="Shigeta K."/>
            <person name="Senba T."/>
            <person name="Matsumura K."/>
            <person name="Nakajima Y."/>
            <person name="Mizuno T."/>
            <person name="Morinaga M."/>
            <person name="Sasaki M."/>
            <person name="Togashi T."/>
            <person name="Oyama M."/>
            <person name="Hata H."/>
            <person name="Watanabe M."/>
            <person name="Komatsu T."/>
            <person name="Mizushima-Sugano J."/>
            <person name="Satoh T."/>
            <person name="Shirai Y."/>
            <person name="Takahashi Y."/>
            <person name="Nakagawa K."/>
            <person name="Okumura K."/>
            <person name="Nagase T."/>
            <person name="Nomura N."/>
            <person name="Kikuchi H."/>
            <person name="Masuho Y."/>
            <person name="Yamashita R."/>
            <person name="Nakai K."/>
            <person name="Yada T."/>
            <person name="Nakamura Y."/>
            <person name="Ohara O."/>
            <person name="Isogai T."/>
            <person name="Sugano S."/>
        </authorList>
    </citation>
    <scope>NUCLEOTIDE SEQUENCE [LARGE SCALE MRNA] (ISOFORM 1)</scope>
    <source>
        <tissue>Embryo</tissue>
    </source>
</reference>
<reference key="2">
    <citation type="journal article" date="2006" name="Nature">
        <title>The DNA sequence and biological annotation of human chromosome 1.</title>
        <authorList>
            <person name="Gregory S.G."/>
            <person name="Barlow K.F."/>
            <person name="McLay K.E."/>
            <person name="Kaul R."/>
            <person name="Swarbreck D."/>
            <person name="Dunham A."/>
            <person name="Scott C.E."/>
            <person name="Howe K.L."/>
            <person name="Woodfine K."/>
            <person name="Spencer C.C.A."/>
            <person name="Jones M.C."/>
            <person name="Gillson C."/>
            <person name="Searle S."/>
            <person name="Zhou Y."/>
            <person name="Kokocinski F."/>
            <person name="McDonald L."/>
            <person name="Evans R."/>
            <person name="Phillips K."/>
            <person name="Atkinson A."/>
            <person name="Cooper R."/>
            <person name="Jones C."/>
            <person name="Hall R.E."/>
            <person name="Andrews T.D."/>
            <person name="Lloyd C."/>
            <person name="Ainscough R."/>
            <person name="Almeida J.P."/>
            <person name="Ambrose K.D."/>
            <person name="Anderson F."/>
            <person name="Andrew R.W."/>
            <person name="Ashwell R.I.S."/>
            <person name="Aubin K."/>
            <person name="Babbage A.K."/>
            <person name="Bagguley C.L."/>
            <person name="Bailey J."/>
            <person name="Beasley H."/>
            <person name="Bethel G."/>
            <person name="Bird C.P."/>
            <person name="Bray-Allen S."/>
            <person name="Brown J.Y."/>
            <person name="Brown A.J."/>
            <person name="Buckley D."/>
            <person name="Burton J."/>
            <person name="Bye J."/>
            <person name="Carder C."/>
            <person name="Chapman J.C."/>
            <person name="Clark S.Y."/>
            <person name="Clarke G."/>
            <person name="Clee C."/>
            <person name="Cobley V."/>
            <person name="Collier R.E."/>
            <person name="Corby N."/>
            <person name="Coville G.J."/>
            <person name="Davies J."/>
            <person name="Deadman R."/>
            <person name="Dunn M."/>
            <person name="Earthrowl M."/>
            <person name="Ellington A.G."/>
            <person name="Errington H."/>
            <person name="Frankish A."/>
            <person name="Frankland J."/>
            <person name="French L."/>
            <person name="Garner P."/>
            <person name="Garnett J."/>
            <person name="Gay L."/>
            <person name="Ghori M.R.J."/>
            <person name="Gibson R."/>
            <person name="Gilby L.M."/>
            <person name="Gillett W."/>
            <person name="Glithero R.J."/>
            <person name="Grafham D.V."/>
            <person name="Griffiths C."/>
            <person name="Griffiths-Jones S."/>
            <person name="Grocock R."/>
            <person name="Hammond S."/>
            <person name="Harrison E.S.I."/>
            <person name="Hart E."/>
            <person name="Haugen E."/>
            <person name="Heath P.D."/>
            <person name="Holmes S."/>
            <person name="Holt K."/>
            <person name="Howden P.J."/>
            <person name="Hunt A.R."/>
            <person name="Hunt S.E."/>
            <person name="Hunter G."/>
            <person name="Isherwood J."/>
            <person name="James R."/>
            <person name="Johnson C."/>
            <person name="Johnson D."/>
            <person name="Joy A."/>
            <person name="Kay M."/>
            <person name="Kershaw J.K."/>
            <person name="Kibukawa M."/>
            <person name="Kimberley A.M."/>
            <person name="King A."/>
            <person name="Knights A.J."/>
            <person name="Lad H."/>
            <person name="Laird G."/>
            <person name="Lawlor S."/>
            <person name="Leongamornlert D.A."/>
            <person name="Lloyd D.M."/>
            <person name="Loveland J."/>
            <person name="Lovell J."/>
            <person name="Lush M.J."/>
            <person name="Lyne R."/>
            <person name="Martin S."/>
            <person name="Mashreghi-Mohammadi M."/>
            <person name="Matthews L."/>
            <person name="Matthews N.S.W."/>
            <person name="McLaren S."/>
            <person name="Milne S."/>
            <person name="Mistry S."/>
            <person name="Moore M.J.F."/>
            <person name="Nickerson T."/>
            <person name="O'Dell C.N."/>
            <person name="Oliver K."/>
            <person name="Palmeiri A."/>
            <person name="Palmer S.A."/>
            <person name="Parker A."/>
            <person name="Patel D."/>
            <person name="Pearce A.V."/>
            <person name="Peck A.I."/>
            <person name="Pelan S."/>
            <person name="Phelps K."/>
            <person name="Phillimore B.J."/>
            <person name="Plumb R."/>
            <person name="Rajan J."/>
            <person name="Raymond C."/>
            <person name="Rouse G."/>
            <person name="Saenphimmachak C."/>
            <person name="Sehra H.K."/>
            <person name="Sheridan E."/>
            <person name="Shownkeen R."/>
            <person name="Sims S."/>
            <person name="Skuce C.D."/>
            <person name="Smith M."/>
            <person name="Steward C."/>
            <person name="Subramanian S."/>
            <person name="Sycamore N."/>
            <person name="Tracey A."/>
            <person name="Tromans A."/>
            <person name="Van Helmond Z."/>
            <person name="Wall M."/>
            <person name="Wallis J.M."/>
            <person name="White S."/>
            <person name="Whitehead S.L."/>
            <person name="Wilkinson J.E."/>
            <person name="Willey D.L."/>
            <person name="Williams H."/>
            <person name="Wilming L."/>
            <person name="Wray P.W."/>
            <person name="Wu Z."/>
            <person name="Coulson A."/>
            <person name="Vaudin M."/>
            <person name="Sulston J.E."/>
            <person name="Durbin R.M."/>
            <person name="Hubbard T."/>
            <person name="Wooster R."/>
            <person name="Dunham I."/>
            <person name="Carter N.P."/>
            <person name="McVean G."/>
            <person name="Ross M.T."/>
            <person name="Harrow J."/>
            <person name="Olson M.V."/>
            <person name="Beck S."/>
            <person name="Rogers J."/>
            <person name="Bentley D.R."/>
        </authorList>
    </citation>
    <scope>NUCLEOTIDE SEQUENCE [LARGE SCALE GENOMIC DNA]</scope>
</reference>
<reference key="3">
    <citation type="journal article" date="2004" name="Genome Res.">
        <title>The status, quality, and expansion of the NIH full-length cDNA project: the Mammalian Gene Collection (MGC).</title>
        <authorList>
            <consortium name="The MGC Project Team"/>
        </authorList>
    </citation>
    <scope>NUCLEOTIDE SEQUENCE [LARGE SCALE MRNA] (ISOFORM 2)</scope>
    <source>
        <tissue>Testis</tissue>
    </source>
</reference>
<reference key="4">
    <citation type="journal article" date="2003" name="J. Biol. Chem.">
        <title>Phosphoproteome analysis of capacitated human sperm. Evidence of tyrosine phosphorylation of a kinase-anchoring protein 3 and valosin-containing protein/p97 during capacitation.</title>
        <authorList>
            <person name="Ficarro S."/>
            <person name="Chertihin O."/>
            <person name="Westbrook V.A."/>
            <person name="White F."/>
            <person name="Jayes F."/>
            <person name="Kalab P."/>
            <person name="Marto J.A."/>
            <person name="Shabanowitz J."/>
            <person name="Herr J.C."/>
            <person name="Hunt D.F."/>
            <person name="Visconti P.E."/>
        </authorList>
    </citation>
    <scope>PHOSPHORYLATION [LARGE SCALE ANALYSIS] AT SER-217 AND SER-219</scope>
    <scope>IDENTIFICATION BY MASS SPECTROMETRY [LARGE SCALE ANALYSIS]</scope>
    <source>
        <tissue>Sperm</tissue>
    </source>
</reference>
<reference key="5">
    <citation type="journal article" date="2017" name="Nat. Struct. Mol. Biol.">
        <title>Site-specific mapping of the human SUMO proteome reveals co-modification with phosphorylation.</title>
        <authorList>
            <person name="Hendriks I.A."/>
            <person name="Lyon D."/>
            <person name="Young C."/>
            <person name="Jensen L.J."/>
            <person name="Vertegaal A.C."/>
            <person name="Nielsen M.L."/>
        </authorList>
    </citation>
    <scope>SUMOYLATION [LARGE SCALE ANALYSIS] AT LYS-248</scope>
    <scope>IDENTIFICATION BY MASS SPECTROMETRY [LARGE SCALE ANALYSIS]</scope>
</reference>
<feature type="signal peptide" evidence="3">
    <location>
        <begin position="1"/>
        <end position="20"/>
    </location>
</feature>
<feature type="chain" id="PRO_0000278441" description="Spermatogenesis-associated protein 6">
    <location>
        <begin position="21"/>
        <end position="488"/>
    </location>
</feature>
<feature type="region of interest" description="Disordered" evidence="4">
    <location>
        <begin position="176"/>
        <end position="199"/>
    </location>
</feature>
<feature type="region of interest" description="Disordered" evidence="4">
    <location>
        <begin position="256"/>
        <end position="275"/>
    </location>
</feature>
<feature type="modified residue" description="Phosphoserine" evidence="7">
    <location>
        <position position="217"/>
    </location>
</feature>
<feature type="modified residue" description="Phosphoserine" evidence="7">
    <location>
        <position position="219"/>
    </location>
</feature>
<feature type="modified residue" description="Phosphoserine" evidence="2">
    <location>
        <position position="265"/>
    </location>
</feature>
<feature type="modified residue" description="Phosphoserine" evidence="2">
    <location>
        <position position="274"/>
    </location>
</feature>
<feature type="modified residue" description="Phosphoserine" evidence="2">
    <location>
        <position position="325"/>
    </location>
</feature>
<feature type="modified residue" description="Phosphoserine" evidence="2">
    <location>
        <position position="343"/>
    </location>
</feature>
<feature type="modified residue" description="Phosphoserine" evidence="2">
    <location>
        <position position="346"/>
    </location>
</feature>
<feature type="modified residue" description="Phosphoserine" evidence="1">
    <location>
        <position position="354"/>
    </location>
</feature>
<feature type="modified residue" description="Phosphoserine" evidence="2">
    <location>
        <position position="424"/>
    </location>
</feature>
<feature type="modified residue" description="Phosphoserine" evidence="2">
    <location>
        <position position="465"/>
    </location>
</feature>
<feature type="modified residue" description="Phosphoserine" evidence="2">
    <location>
        <position position="487"/>
    </location>
</feature>
<feature type="glycosylation site" description="N-linked (GlcNAc...) asparagine" evidence="3">
    <location>
        <position position="181"/>
    </location>
</feature>
<feature type="cross-link" description="Glycyl lysine isopeptide (Lys-Gly) (interchain with G-Cter in SUMO2)" evidence="8">
    <location>
        <position position="248"/>
    </location>
</feature>
<feature type="splice variant" id="VSP_023277" description="In isoform 2." evidence="5">
    <location>
        <begin position="383"/>
        <end position="398"/>
    </location>
</feature>
<feature type="sequence variant" id="VAR_030774" description="In dbSNP:rs1338314.">
    <original>R</original>
    <variation>W</variation>
    <location>
        <position position="333"/>
    </location>
</feature>
<feature type="sequence variant" id="VAR_062174" description="In dbSNP:rs1056042.">
    <original>C</original>
    <variation>F</variation>
    <location>
        <position position="478"/>
    </location>
</feature>
<feature type="sequence variant" id="VAR_062175" description="In dbSNP:rs1056042.">
    <original>C</original>
    <variation>S</variation>
    <location>
        <position position="478"/>
    </location>
</feature>
<feature type="sequence variant" id="VAR_030775" description="In dbSNP:rs1056042.">
    <original>C</original>
    <variation>Y</variation>
    <location>
        <position position="478"/>
    </location>
</feature>
<feature type="sequence conflict" description="In Ref. 3; AAH20660." evidence="6" ref="3">
    <original>L</original>
    <variation>P</variation>
    <location>
        <position position="25"/>
    </location>
</feature>
<feature type="sequence conflict" description="In Ref. 3; AAH20660." evidence="6" ref="3">
    <original>K</original>
    <variation>I</variation>
    <location>
        <position position="28"/>
    </location>
</feature>
<evidence type="ECO:0000250" key="1">
    <source>
        <dbReference type="UniProtKB" id="Q3U6K5"/>
    </source>
</evidence>
<evidence type="ECO:0000250" key="2">
    <source>
        <dbReference type="UniProtKB" id="Q99MU5"/>
    </source>
</evidence>
<evidence type="ECO:0000255" key="3"/>
<evidence type="ECO:0000256" key="4">
    <source>
        <dbReference type="SAM" id="MobiDB-lite"/>
    </source>
</evidence>
<evidence type="ECO:0000303" key="5">
    <source>
    </source>
</evidence>
<evidence type="ECO:0000305" key="6"/>
<evidence type="ECO:0007744" key="7">
    <source>
    </source>
</evidence>
<evidence type="ECO:0007744" key="8">
    <source>
    </source>
</evidence>
<proteinExistence type="evidence at protein level"/>
<dbReference type="EMBL" id="AK000869">
    <property type="protein sequence ID" value="BAA91403.1"/>
    <property type="molecule type" value="mRNA"/>
</dbReference>
<dbReference type="EMBL" id="AL359959">
    <property type="status" value="NOT_ANNOTATED_CDS"/>
    <property type="molecule type" value="Genomic_DNA"/>
</dbReference>
<dbReference type="EMBL" id="AL356968">
    <property type="status" value="NOT_ANNOTATED_CDS"/>
    <property type="molecule type" value="Genomic_DNA"/>
</dbReference>
<dbReference type="EMBL" id="BC020660">
    <property type="protein sequence ID" value="AAH20660.1"/>
    <property type="molecule type" value="mRNA"/>
</dbReference>
<dbReference type="CCDS" id="CCDS551.1">
    <molecule id="Q9NWH7-1"/>
</dbReference>
<dbReference type="CCDS" id="CCDS65535.1">
    <molecule id="Q9NWH7-2"/>
</dbReference>
<dbReference type="RefSeq" id="NP_001273167.1">
    <molecule id="Q9NWH7-2"/>
    <property type="nucleotide sequence ID" value="NM_001286238.2"/>
</dbReference>
<dbReference type="RefSeq" id="NP_061946.1">
    <molecule id="Q9NWH7-1"/>
    <property type="nucleotide sequence ID" value="NM_019073.4"/>
</dbReference>
<dbReference type="BioGRID" id="120043">
    <property type="interactions" value="33"/>
</dbReference>
<dbReference type="FunCoup" id="Q9NWH7">
    <property type="interactions" value="60"/>
</dbReference>
<dbReference type="IntAct" id="Q9NWH7">
    <property type="interactions" value="11"/>
</dbReference>
<dbReference type="STRING" id="9606.ENSP00000360913"/>
<dbReference type="GlyCosmos" id="Q9NWH7">
    <property type="glycosylation" value="1 site, No reported glycans"/>
</dbReference>
<dbReference type="GlyGen" id="Q9NWH7">
    <property type="glycosylation" value="1 site"/>
</dbReference>
<dbReference type="iPTMnet" id="Q9NWH7"/>
<dbReference type="PhosphoSitePlus" id="Q9NWH7"/>
<dbReference type="BioMuta" id="SPATA6"/>
<dbReference type="DMDM" id="74753022"/>
<dbReference type="jPOST" id="Q9NWH7"/>
<dbReference type="MassIVE" id="Q9NWH7"/>
<dbReference type="PaxDb" id="9606-ENSP00000360913"/>
<dbReference type="PeptideAtlas" id="Q9NWH7"/>
<dbReference type="ProteomicsDB" id="82938">
    <molecule id="Q9NWH7-1"/>
</dbReference>
<dbReference type="ProteomicsDB" id="82939">
    <molecule id="Q9NWH7-2"/>
</dbReference>
<dbReference type="Antibodypedia" id="32902">
    <property type="antibodies" value="85 antibodies from 24 providers"/>
</dbReference>
<dbReference type="DNASU" id="54558"/>
<dbReference type="Ensembl" id="ENST00000371843.7">
    <molecule id="Q9NWH7-2"/>
    <property type="protein sequence ID" value="ENSP00000360909.3"/>
    <property type="gene ID" value="ENSG00000132122.12"/>
</dbReference>
<dbReference type="Ensembl" id="ENST00000371847.8">
    <molecule id="Q9NWH7-1"/>
    <property type="protein sequence ID" value="ENSP00000360913.3"/>
    <property type="gene ID" value="ENSG00000132122.12"/>
</dbReference>
<dbReference type="GeneID" id="54558"/>
<dbReference type="KEGG" id="hsa:54558"/>
<dbReference type="MANE-Select" id="ENST00000371847.8">
    <property type="protein sequence ID" value="ENSP00000360913.3"/>
    <property type="RefSeq nucleotide sequence ID" value="NM_019073.4"/>
    <property type="RefSeq protein sequence ID" value="NP_061946.1"/>
</dbReference>
<dbReference type="UCSC" id="uc001crr.4">
    <molecule id="Q9NWH7-1"/>
    <property type="organism name" value="human"/>
</dbReference>
<dbReference type="AGR" id="HGNC:18309"/>
<dbReference type="CTD" id="54558"/>
<dbReference type="DisGeNET" id="54558"/>
<dbReference type="GeneCards" id="SPATA6"/>
<dbReference type="HGNC" id="HGNC:18309">
    <property type="gene designation" value="SPATA6"/>
</dbReference>
<dbReference type="HPA" id="ENSG00000132122">
    <property type="expression patterns" value="Tissue enhanced (testis)"/>
</dbReference>
<dbReference type="MIM" id="613947">
    <property type="type" value="gene"/>
</dbReference>
<dbReference type="neXtProt" id="NX_Q9NWH7"/>
<dbReference type="OpenTargets" id="ENSG00000132122"/>
<dbReference type="PharmGKB" id="PA38312"/>
<dbReference type="VEuPathDB" id="HostDB:ENSG00000132122"/>
<dbReference type="eggNOG" id="ENOG502QRV3">
    <property type="taxonomic scope" value="Eukaryota"/>
</dbReference>
<dbReference type="GeneTree" id="ENSGT00530000063821"/>
<dbReference type="HOGENOM" id="CLU_038272_2_0_1"/>
<dbReference type="InParanoid" id="Q9NWH7"/>
<dbReference type="OMA" id="HGREFDD"/>
<dbReference type="OrthoDB" id="5963614at2759"/>
<dbReference type="PAN-GO" id="Q9NWH7">
    <property type="GO annotations" value="4 GO annotations based on evolutionary models"/>
</dbReference>
<dbReference type="PhylomeDB" id="Q9NWH7"/>
<dbReference type="TreeFam" id="TF328520"/>
<dbReference type="PathwayCommons" id="Q9NWH7"/>
<dbReference type="SignaLink" id="Q9NWH7"/>
<dbReference type="BioGRID-ORCS" id="54558">
    <property type="hits" value="8 hits in 1150 CRISPR screens"/>
</dbReference>
<dbReference type="ChiTaRS" id="SPATA6">
    <property type="organism name" value="human"/>
</dbReference>
<dbReference type="GenomeRNAi" id="54558"/>
<dbReference type="Pharos" id="Q9NWH7">
    <property type="development level" value="Tbio"/>
</dbReference>
<dbReference type="PRO" id="PR:Q9NWH7"/>
<dbReference type="Proteomes" id="UP000005640">
    <property type="component" value="Chromosome 1"/>
</dbReference>
<dbReference type="RNAct" id="Q9NWH7">
    <property type="molecule type" value="protein"/>
</dbReference>
<dbReference type="Bgee" id="ENSG00000132122">
    <property type="expression patterns" value="Expressed in sperm and 157 other cell types or tissues"/>
</dbReference>
<dbReference type="ExpressionAtlas" id="Q9NWH7">
    <property type="expression patterns" value="baseline and differential"/>
</dbReference>
<dbReference type="GO" id="GO:0005576">
    <property type="term" value="C:extracellular region"/>
    <property type="evidence" value="ECO:0007669"/>
    <property type="project" value="UniProtKB-SubCell"/>
</dbReference>
<dbReference type="GO" id="GO:0031514">
    <property type="term" value="C:motile cilium"/>
    <property type="evidence" value="ECO:0007669"/>
    <property type="project" value="UniProtKB-SubCell"/>
</dbReference>
<dbReference type="GO" id="GO:0120212">
    <property type="term" value="C:sperm head-tail coupling apparatus"/>
    <property type="evidence" value="ECO:0000250"/>
    <property type="project" value="UniProtKB"/>
</dbReference>
<dbReference type="GO" id="GO:0032027">
    <property type="term" value="F:myosin light chain binding"/>
    <property type="evidence" value="ECO:0000318"/>
    <property type="project" value="GO_Central"/>
</dbReference>
<dbReference type="GO" id="GO:0030154">
    <property type="term" value="P:cell differentiation"/>
    <property type="evidence" value="ECO:0007669"/>
    <property type="project" value="UniProtKB-KW"/>
</dbReference>
<dbReference type="GO" id="GO:0044458">
    <property type="term" value="P:motile cilium assembly"/>
    <property type="evidence" value="ECO:0000250"/>
    <property type="project" value="UniProtKB"/>
</dbReference>
<dbReference type="GO" id="GO:0007283">
    <property type="term" value="P:spermatogenesis"/>
    <property type="evidence" value="ECO:0000250"/>
    <property type="project" value="UniProtKB"/>
</dbReference>
<dbReference type="InterPro" id="IPR042769">
    <property type="entry name" value="SPATA6_fam"/>
</dbReference>
<dbReference type="InterPro" id="IPR032732">
    <property type="entry name" value="SPATA6_N"/>
</dbReference>
<dbReference type="PANTHER" id="PTHR16435:SF3">
    <property type="entry name" value="SPERMATOGENESIS-ASSOCIATED PROTEIN 6"/>
    <property type="match status" value="1"/>
</dbReference>
<dbReference type="PANTHER" id="PTHR16435">
    <property type="entry name" value="SPERMATOGENESIS-ASSOCIATED PROTEIN 6 SPATA6"/>
    <property type="match status" value="1"/>
</dbReference>
<dbReference type="Pfam" id="PF14909">
    <property type="entry name" value="SPATA6"/>
    <property type="match status" value="1"/>
</dbReference>
<sequence length="488" mass="55989">MPKVKALQCALALEISSVTCPGVVLKDKEDIYLSICVFGQYKKTQCVPATFPLVFNARMVFEKVFPDAVDPGDVVTQLEYDTAVFELIQLVPPVGETLSTYDENTRDFMFPGPNQMSGHHDSNRQVTMRRISGLRGNAPRLEFSTTSVITECLISSRKCHTQDKFIYHLAPVEKSHGRLQNRTSRSQKKKSKSPERSKYCINAKNYEQPTISSKSHSPSPYTKRRMCELSEDTRRRLAHLNLGPYEFKKETDKPPFVIRHVDPPSPRADTLLGSSGRDCERDGWSRVHNDHSHLGCCRPKDYKVIRTPHGRDFDDSLEKCEEYLSPRSCSKPRHSARTLLVHSAPSTMPKHSPSPVLNRASLRERFHSDWCSPSNCDEIHDRVKNVLKSHQAHQRHLYDERDLEKDDELELKRSLLCRDSAYDSDPEYSSCQQPRGTFHLDDGEYWSNRAASYKGKSHRPIFENSMDKMYRNLYKKACSSASHTQESF</sequence>
<name>SPAT6_HUMAN</name>